<organismHost>
    <name type="scientific">Macaca mulatta</name>
    <name type="common">Rhesus macaque</name>
    <dbReference type="NCBI Taxonomy" id="9544"/>
</organismHost>
<gene>
    <name type="primary">pol</name>
</gene>
<reference key="1">
    <citation type="journal article" date="1987" name="Virology">
        <title>Sequence relationships of type D retroviruses which cause simian acquired immunodeficiency syndrome.</title>
        <authorList>
            <person name="Thayer R.M."/>
            <person name="Power M.D."/>
            <person name="Bryant M.L."/>
            <person name="Gardner M.B."/>
            <person name="Barr P.J."/>
            <person name="Luciw P.A."/>
        </authorList>
    </citation>
    <scope>NUCLEOTIDE SEQUENCE [GENOMIC RNA]</scope>
</reference>
<reference key="2">
    <citation type="journal article" date="2013" name="Biomed. Res. Int.">
        <title>A genome-wide analysis of RNA pseudoknots that stimulate efficient -1 ribosomal frameshifting or readthrough in animal viruses.</title>
        <authorList>
            <person name="Huang X."/>
            <person name="Cheng Q."/>
            <person name="Du Z."/>
        </authorList>
    </citation>
    <scope>RIBOSOMAL FRAMESHIFT</scope>
</reference>
<reference key="3">
    <citation type="journal article" date="2017" name="Curr. Opin. Struct. Biol.">
        <title>Retroviral intasomes arising.</title>
        <authorList>
            <person name="Engelman A.N."/>
            <person name="Cherepanov P."/>
        </authorList>
    </citation>
    <scope>REVIEW (INTEGRASE)</scope>
</reference>
<sequence length="1768" mass="197910">MGQELSQHELYVEQLKKALKTRGVKVKGNDLLKFFDFVKDTCPWFPQEGTIDIKRWRRVGDCFQDYYNTFGPEKIPVTAFSYWNLIKDLIDKKEADPQVMAAVTQTEKILKVSSQTDLRDNSHNKDMDLISLESDDEEAKAPSEKMTMSNKSPKKYPAMLASQNNNTDKDPDLSEVDWDGLEDEAAKYHNPDWPPFLSRPPPYNRTAATAPAVMAVVNPKEELKEKISQLEEQIKLEELHQSLIIRLQKLKTGNERVTSSGNIESHSRTPKWPGQCLPKGKYLINKNTEEYPPKDIFPVTETMDGQGQAWRHHNGFDFTVIKELKTAVSQYGATAPYTLAIVESIADNWLTPTDWNTLVRAVLSGGDHLIWKSEFFENCRDTAKRNQQAGNGWDFDMLTGSGNYANTDAQMQYDPGLFAQIQAAATNAWRKLPVKGDPGASLTGVKQGPDEPFADFVHRLITTAGRIFGNAEAGVDYVKQLAYENANPACQAAIRPYRKKTDLTGYIRLCSDIGPSYQQGLAMAAAFSGQTVKDLLNNKNKDRGGCFKCGKKGHFAKDCRDHSNKNPESKVPGLCPRCKRGKHWANECKSKTDSQGNPLPPHQGNRDEGPAPGPEASLWGSQLCSSQQQQSISKLNRASPGSAGLDLCSTTHTVLTPEMGPQTLATGVYGPLPPNTFGLILGRGSTTVKGLQIYPGVIDNDYTGEFKIMARAISSIITIPQGERIAQLVLLPLLRTAHKIQHPYRGDKNFGSSDIFWVQPITHQKPSLVLWLDGKAFTGLIDTGADVTIIKQEDWPSHWPTTETLTNLRGIGQSNNPRQSSKYLTWKDKENNSGLIKPFVIPNLPVNLWGRDLLSQMKIMMCSPNDIVTAQMLAQGYSPGKGLGKREDGILQPIPNSGQLDRKGFGNFLATAVDILAPQRYADPITWKSDEPVWVDQWPLTQEKLAAAQQLVQEQLQAGHIIESNSPWNTPIFVIKKKSGKWRLLQDLRAVNATMVLMGALQPGLPSPVAIPQGYFKIVIDLKDCFFTIPLQPVDQKRFAFSLPSTNFKQPMKRYQWKVLPQGMANSPTLCQKYVAAAIEPVRKSWAQMYIIHYMDDILIAGKLGEQVLQCFAQLKQALTTTGLQIAPEKVQLQDPYTYLGFQINGPKITNQKAVIRRDKLQTLNDFQKLLGDINWLRPYLHLTTGDLKPLFDILKGDSNPNSPRSLSEAALASLQKVETAIAEQFVTQIDYTQPLTFLIFNTTLTPTGLFWQNNPVMWVHLPASPKKVLLPYYDAIADLIILGRDNSKKYFGLEPSTIIQPYSKSQIHWLMQNTETWPIACASYAGNIDNHYPPNKLIQFCKLHAVVFPRIISKTPLDNALLVFTDGSSTGIAAYTFEKTTVRFKTSHTSAQLVELQALIAVLSAFPHRALNVYTDSAYLAHSIPLLETVSHIKHISDTAKFFLQCQQLIYNRSIPFYLGHIRAHSGLPGPLSQGNHITDLATKVVATTLTTNLTEAQTAHALHHLNAQSLRLMFKITREQARQIVKQCPTCVTYLPIPHFGVNPKGLVPNMLWQMDVTHYSEFGKLKYVHVSIDTFSGFLVATLQTGEATKHVIAHLLHCFSIIGQPIHIKTDNGPGYTSSNFRAFCSKLHIKHTFGIPYNPQGQGIVERAHLSLKNTLEKIKKGEWYPTQGSPRNILNHALFILNFLNLDAQNKSAADRFWHTSSKKEYAMVKWKDPLDNTWHGPDPVLIWGRGSVCVYSQTHDAARWLPERLVRQVSNVTQSRE</sequence>
<accession>P51517</accession>
<evidence type="ECO:0000250" key="1">
    <source>
        <dbReference type="UniProtKB" id="P03354"/>
    </source>
</evidence>
<evidence type="ECO:0000250" key="2">
    <source>
        <dbReference type="UniProtKB" id="P03365"/>
    </source>
</evidence>
<evidence type="ECO:0000250" key="3">
    <source>
        <dbReference type="UniProtKB" id="P07567"/>
    </source>
</evidence>
<evidence type="ECO:0000250" key="4">
    <source>
        <dbReference type="UniProtKB" id="P07570"/>
    </source>
</evidence>
<evidence type="ECO:0000250" key="5">
    <source>
        <dbReference type="UniProtKB" id="P07572"/>
    </source>
</evidence>
<evidence type="ECO:0000250" key="6">
    <source>
        <dbReference type="UniProtKB" id="P10258"/>
    </source>
</evidence>
<evidence type="ECO:0000250" key="7">
    <source>
        <dbReference type="UniProtKB" id="P11283"/>
    </source>
</evidence>
<evidence type="ECO:0000255" key="8"/>
<evidence type="ECO:0000255" key="9">
    <source>
        <dbReference type="PROSITE-ProRule" id="PRU00047"/>
    </source>
</evidence>
<evidence type="ECO:0000255" key="10">
    <source>
        <dbReference type="PROSITE-ProRule" id="PRU00092"/>
    </source>
</evidence>
<evidence type="ECO:0000255" key="11">
    <source>
        <dbReference type="PROSITE-ProRule" id="PRU00275"/>
    </source>
</evidence>
<evidence type="ECO:0000255" key="12">
    <source>
        <dbReference type="PROSITE-ProRule" id="PRU00405"/>
    </source>
</evidence>
<evidence type="ECO:0000255" key="13">
    <source>
        <dbReference type="PROSITE-ProRule" id="PRU00408"/>
    </source>
</evidence>
<evidence type="ECO:0000255" key="14">
    <source>
        <dbReference type="PROSITE-ProRule" id="PRU00450"/>
    </source>
</evidence>
<evidence type="ECO:0000255" key="15">
    <source>
        <dbReference type="PROSITE-ProRule" id="PRU00457"/>
    </source>
</evidence>
<evidence type="ECO:0000255" key="16">
    <source>
        <dbReference type="PROSITE-ProRule" id="PRU00506"/>
    </source>
</evidence>
<evidence type="ECO:0000256" key="17">
    <source>
        <dbReference type="SAM" id="MobiDB-lite"/>
    </source>
</evidence>
<evidence type="ECO:0000305" key="18"/>
<evidence type="ECO:0000305" key="19">
    <source>
    </source>
</evidence>
<evidence type="ECO:0000305" key="20">
    <source>
    </source>
</evidence>
<comment type="function">
    <molecule>Matrix protein p10</molecule>
    <text evidence="5">Matrix protein.</text>
</comment>
<comment type="function">
    <text evidence="5">Nucleocapsid protein p14: Nucleocapsid protein.</text>
</comment>
<comment type="function">
    <molecule>Capsid protein p27</molecule>
    <text evidence="5">Capsid protein.</text>
</comment>
<comment type="function">
    <molecule>Protease 17 kDa</molecule>
    <text evidence="5 11">The aspartyl protease mediates proteolytic cleavages of Gag and Gag-Pol polyproteins during or shortly after the release of the virion from the plasma membrane. Cleavages take place as an ordered, step-wise cascade to yield mature proteins. This process is called maturation. Displays maximal activity during the budding process just prior to particle release from the cell.</text>
</comment>
<comment type="function">
    <molecule>Protease 13 kDa</molecule>
    <text evidence="5 11">The aspartyl protease mediates proteolytic cleavages of Gag and Gag-Pol polyproteins during or shortly after the release of the virion from the plasma membrane. Cleavages take place as an ordered, step-wise cascade to yield mature proteins. This process is called maturation. Displays maximal activity during the budding process just prior to particle release from the cell.</text>
</comment>
<comment type="function">
    <molecule>G-patch peptide</molecule>
    <text evidence="5">Enhances the activity of the reverse transcriptase. May be part of the mature RT.</text>
</comment>
<comment type="function">
    <molecule>Reverse transcriptase/ribonuclease H</molecule>
    <text evidence="12">RT is a multifunctional enzyme that converts the viral dimeric RNA genome into dsDNA in the cytoplasm, shortly after virus entry into the cell. This enzyme displays a DNA polymerase activity that can copy either DNA or RNA templates, and a ribonuclease H (RNase H) activity that cleaves the RNA strand of RNA-DNA heteroduplexes in a partially processive 3' to 5' endonucleasic mode. Conversion of viral genomic RNA into dsDNA requires many steps. A tRNA binds to the primer-binding site (PBS) situated at the 5' end of the viral RNA. RT uses the 3' end of the tRNA primer to perfom a short round of RNA-dependent minus-strand DNA synthesis. The reading proceeds through the U5 region and ends after the repeated (R) region which is present at both ends of viral RNA. The portion of the RNA-DNA heteroduplex is digested by the RNase H, resulting in a ssDNA product attached to the tRNA primer. This ssDNA/tRNA hybridizes with the identical R region situated at the 3' end of viral RNA. This template exchange, known as minus-strand DNA strong stop transfer, can be either intra- or intermolecular. RT uses the 3' end of this newly synthesized short ssDNA to perfom the RNA-dependent minus-strand DNA synthesis of the whole template. RNase H digests the RNA template except for a polypurine tract (PPT) situated at the 5' end of the genome. It is not clear if both polymerase and RNase H activities are simultaneous. RNase H probably can proceed both in a polymerase-dependent (RNA cut into small fragments by the same RT performing DNA synthesis) and a polymerase-independent mode (cleavage of remaining RNA fragments by free RTs). Secondly, RT performs DNA-directed plus-strand DNA synthesis using the PPT that has not been removed by RNase H as primers. PPT and tRNA primers are then removed by RNase H. The 3' and 5' ssDNA PBS regions hybridize to form a circular dsDNA intermediate. Strand displacement synthesis by RT to the PBS and PPT ends produces a blunt ended, linear dsDNA copy of the viral genome that includes long terminal repeats (LTRs) at both ends.</text>
</comment>
<comment type="function">
    <molecule>Integrase</molecule>
    <text evidence="20">Catalyzes viral DNA integration into the host chromosome, by performing a series of DNA cutting and joining reactions.</text>
</comment>
<comment type="catalytic activity">
    <reaction evidence="12">
        <text>DNA(n) + a 2'-deoxyribonucleoside 5'-triphosphate = DNA(n+1) + diphosphate</text>
        <dbReference type="Rhea" id="RHEA:22508"/>
        <dbReference type="Rhea" id="RHEA-COMP:17339"/>
        <dbReference type="Rhea" id="RHEA-COMP:17340"/>
        <dbReference type="ChEBI" id="CHEBI:33019"/>
        <dbReference type="ChEBI" id="CHEBI:61560"/>
        <dbReference type="ChEBI" id="CHEBI:173112"/>
        <dbReference type="EC" id="2.7.7.49"/>
    </reaction>
</comment>
<comment type="catalytic activity">
    <reaction evidence="12">
        <text>DNA(n) + a 2'-deoxyribonucleoside 5'-triphosphate = DNA(n+1) + diphosphate</text>
        <dbReference type="Rhea" id="RHEA:22508"/>
        <dbReference type="Rhea" id="RHEA-COMP:17339"/>
        <dbReference type="Rhea" id="RHEA-COMP:17340"/>
        <dbReference type="ChEBI" id="CHEBI:33019"/>
        <dbReference type="ChEBI" id="CHEBI:61560"/>
        <dbReference type="ChEBI" id="CHEBI:173112"/>
        <dbReference type="EC" id="2.7.7.7"/>
    </reaction>
</comment>
<comment type="catalytic activity">
    <reaction evidence="13">
        <text>Endonucleolytic cleavage to 5'-phosphomonoester.</text>
        <dbReference type="EC" id="3.1.26.4"/>
    </reaction>
</comment>
<comment type="catalytic activity">
    <reaction evidence="4">
        <text>dUTP + H2O = dUMP + diphosphate + H(+)</text>
        <dbReference type="Rhea" id="RHEA:10248"/>
        <dbReference type="ChEBI" id="CHEBI:15377"/>
        <dbReference type="ChEBI" id="CHEBI:15378"/>
        <dbReference type="ChEBI" id="CHEBI:33019"/>
        <dbReference type="ChEBI" id="CHEBI:61555"/>
        <dbReference type="ChEBI" id="CHEBI:246422"/>
        <dbReference type="EC" id="3.6.1.23"/>
    </reaction>
</comment>
<comment type="cofactor">
    <cofactor evidence="12">
        <name>Mg(2+)</name>
        <dbReference type="ChEBI" id="CHEBI:18420"/>
    </cofactor>
    <text evidence="12">The RT polymerase active site binds 2 magnesium ions.</text>
</comment>
<comment type="subunit">
    <molecule>Protease 17 kDa</molecule>
    <text evidence="4">Homodimer.</text>
</comment>
<comment type="subunit">
    <molecule>Reverse transcriptase/ribonuclease H</molecule>
    <text evidence="4">Interacts with the G-patch peptide.</text>
</comment>
<comment type="subunit">
    <molecule>G-patch peptide</molecule>
    <text evidence="4">Interacts with the reverse transcriptase/ribonuclease H.</text>
</comment>
<comment type="subunit">
    <molecule>Nucleocapsid protein-dUTPase</molecule>
    <text evidence="4">Homotrimer.</text>
</comment>
<comment type="subcellular location">
    <molecule>Matrix protein p10</molecule>
    <subcellularLocation>
        <location evidence="18">Virion</location>
    </subcellularLocation>
</comment>
<comment type="subcellular location">
    <molecule>Capsid protein p27</molecule>
    <subcellularLocation>
        <location evidence="18">Virion</location>
    </subcellularLocation>
</comment>
<comment type="subcellular location">
    <molecule>Nucleocapsid protein-dUTPase</molecule>
    <subcellularLocation>
        <location evidence="18">Virion</location>
    </subcellularLocation>
</comment>
<comment type="subcellular location">
    <molecule>Protease 13 kDa</molecule>
    <subcellularLocation>
        <location evidence="5">Virion</location>
    </subcellularLocation>
</comment>
<comment type="subcellular location">
    <molecule>Protease 17 kDa</molecule>
    <subcellularLocation>
        <location evidence="5">Virion</location>
    </subcellularLocation>
</comment>
<comment type="alternative products">
    <event type="ribosomal frameshifting"/>
    <isoform>
        <id>P51517-1</id>
        <name>Gag-Pro-Pol polyprotein</name>
        <sequence type="displayed"/>
    </isoform>
    <isoform>
        <id>P51518-1</id>
        <name>Gag-Pro polyprotein</name>
        <sequence type="external"/>
    </isoform>
    <isoform>
        <id>P51516-1</id>
        <name>Gag polyprotein</name>
        <sequence type="external"/>
    </isoform>
</comment>
<comment type="domain">
    <text evidence="5">Gag polyprotein: Late-budding domains (L domains) are short sequence motifs essential for viral particle release. They can occur individually or in close proximity within structural proteins. They interacts with sorting cellular proteins of the multivesicular body (MVB) pathway. Most of these proteins are class E vacuolar protein sorting factors belonging to ESCRT-I, ESCRT-II or ESCRT-III complexes. Phosphorylated protein pp24 and phosphorylated protein pp18 contains one L domain: a PPXY motif which binds to the WW domains of the ubiquitin ligase NEDD4.</text>
</comment>
<comment type="domain">
    <molecule>Protease 17 kDa</molecule>
    <text evidence="5">The glycine-rich G-patch domain (GPD) is present at the C-terminus of the protease from which it is then detached by the protease itself.</text>
</comment>
<comment type="PTM">
    <molecule>Protease 17 kDa</molecule>
    <text evidence="5">Released by autocatalytic processing. The protease can undergo further autoprocessing to yield 2 shorter but enzymatically active forms of 12 kDa and 13 kDa.</text>
</comment>
<comment type="PTM">
    <molecule>Gag-Pro-Pol polyprotein</molecule>
    <text evidence="6">Myristoylated. Myristoylation of the matrix (MA) domain mediates the transport and binding of Gag polyproteins to the host plasma membrane and is required for the assembly of viral particles.</text>
</comment>
<comment type="PTM">
    <molecule>Gag-Pro-Pol polyprotein</molecule>
    <text evidence="5">Specific enzymatic cleavages in vivo yield mature proteins.</text>
</comment>
<comment type="miscellaneous">
    <molecule>Reverse transcriptase/ribonuclease H</molecule>
    <text evidence="12">The reverse transcriptase is an error-prone enzyme that lacks a proof-reading function. High mutations rate is a direct consequence of this characteristic. RT also displays frequent template switching leading to high recombination rate. Recombination mostly occurs between homologous regions of the two copackaged RNA genomes. If these two RNA molecules derive from different viral strains, reverse transcription will give rise to highly recombinated proviral DNAs.</text>
</comment>
<comment type="miscellaneous">
    <molecule>Isoform Gag-Pro-Pol polyprotein</molecule>
    <text evidence="19">Produced by -1 ribosomal frameshiftings between gag-pro and pro-pol.</text>
</comment>
<comment type="similarity">
    <text evidence="18">Belongs to the retroviral Pol polyprotein family.</text>
</comment>
<dbReference type="EC" id="3.6.1.23" evidence="7"/>
<dbReference type="EC" id="3.4.23.-" evidence="11"/>
<dbReference type="EC" id="2.7.7.49" evidence="12"/>
<dbReference type="EC" id="2.7.7.7" evidence="12"/>
<dbReference type="EC" id="3.1.26.4" evidence="13"/>
<dbReference type="EC" id="2.7.7.-" evidence="7"/>
<dbReference type="EC" id="3.1.-.-" evidence="7"/>
<dbReference type="EMBL" id="M16605">
    <property type="protein sequence ID" value="AAA47562.1"/>
    <property type="molecule type" value="Genomic_RNA"/>
</dbReference>
<dbReference type="SMR" id="P51517"/>
<dbReference type="Proteomes" id="UP000007229">
    <property type="component" value="Genome"/>
</dbReference>
<dbReference type="GO" id="GO:0019013">
    <property type="term" value="C:viral nucleocapsid"/>
    <property type="evidence" value="ECO:0007669"/>
    <property type="project" value="UniProtKB-KW"/>
</dbReference>
<dbReference type="GO" id="GO:0004190">
    <property type="term" value="F:aspartic-type endopeptidase activity"/>
    <property type="evidence" value="ECO:0007669"/>
    <property type="project" value="UniProtKB-KW"/>
</dbReference>
<dbReference type="GO" id="GO:0003677">
    <property type="term" value="F:DNA binding"/>
    <property type="evidence" value="ECO:0007669"/>
    <property type="project" value="UniProtKB-KW"/>
</dbReference>
<dbReference type="GO" id="GO:0003887">
    <property type="term" value="F:DNA-directed DNA polymerase activity"/>
    <property type="evidence" value="ECO:0007669"/>
    <property type="project" value="UniProtKB-KW"/>
</dbReference>
<dbReference type="GO" id="GO:0004170">
    <property type="term" value="F:dUTP diphosphatase activity"/>
    <property type="evidence" value="ECO:0007669"/>
    <property type="project" value="UniProtKB-EC"/>
</dbReference>
<dbReference type="GO" id="GO:0035613">
    <property type="term" value="F:RNA stem-loop binding"/>
    <property type="evidence" value="ECO:0007669"/>
    <property type="project" value="TreeGrafter"/>
</dbReference>
<dbReference type="GO" id="GO:0003964">
    <property type="term" value="F:RNA-directed DNA polymerase activity"/>
    <property type="evidence" value="ECO:0007669"/>
    <property type="project" value="UniProtKB-KW"/>
</dbReference>
<dbReference type="GO" id="GO:0004523">
    <property type="term" value="F:RNA-DNA hybrid ribonuclease activity"/>
    <property type="evidence" value="ECO:0007669"/>
    <property type="project" value="UniProtKB-EC"/>
</dbReference>
<dbReference type="GO" id="GO:0039660">
    <property type="term" value="F:structural constituent of virion"/>
    <property type="evidence" value="ECO:0007669"/>
    <property type="project" value="UniProtKB-KW"/>
</dbReference>
<dbReference type="GO" id="GO:0008270">
    <property type="term" value="F:zinc ion binding"/>
    <property type="evidence" value="ECO:0007669"/>
    <property type="project" value="UniProtKB-KW"/>
</dbReference>
<dbReference type="GO" id="GO:0015074">
    <property type="term" value="P:DNA integration"/>
    <property type="evidence" value="ECO:0007669"/>
    <property type="project" value="UniProtKB-KW"/>
</dbReference>
<dbReference type="GO" id="GO:0006310">
    <property type="term" value="P:DNA recombination"/>
    <property type="evidence" value="ECO:0007669"/>
    <property type="project" value="UniProtKB-KW"/>
</dbReference>
<dbReference type="GO" id="GO:0075713">
    <property type="term" value="P:establishment of integrated proviral latency"/>
    <property type="evidence" value="ECO:0007669"/>
    <property type="project" value="UniProtKB-KW"/>
</dbReference>
<dbReference type="GO" id="GO:0006508">
    <property type="term" value="P:proteolysis"/>
    <property type="evidence" value="ECO:0007669"/>
    <property type="project" value="UniProtKB-KW"/>
</dbReference>
<dbReference type="GO" id="GO:0046718">
    <property type="term" value="P:symbiont entry into host cell"/>
    <property type="evidence" value="ECO:0007669"/>
    <property type="project" value="UniProtKB-KW"/>
</dbReference>
<dbReference type="GO" id="GO:0044826">
    <property type="term" value="P:viral genome integration into host DNA"/>
    <property type="evidence" value="ECO:0007669"/>
    <property type="project" value="UniProtKB-KW"/>
</dbReference>
<dbReference type="GO" id="GO:0075523">
    <property type="term" value="P:viral translational frameshifting"/>
    <property type="evidence" value="ECO:0007669"/>
    <property type="project" value="UniProtKB-KW"/>
</dbReference>
<dbReference type="CDD" id="cd05482">
    <property type="entry name" value="HIV_retropepsin_like"/>
    <property type="match status" value="1"/>
</dbReference>
<dbReference type="CDD" id="cd09273">
    <property type="entry name" value="RNase_HI_RT_Bel"/>
    <property type="match status" value="1"/>
</dbReference>
<dbReference type="CDD" id="cd01645">
    <property type="entry name" value="RT_Rtv"/>
    <property type="match status" value="1"/>
</dbReference>
<dbReference type="CDD" id="cd07557">
    <property type="entry name" value="trimeric_dUTPase"/>
    <property type="match status" value="1"/>
</dbReference>
<dbReference type="Gene3D" id="1.10.10.200">
    <property type="match status" value="1"/>
</dbReference>
<dbReference type="Gene3D" id="1.10.1200.30">
    <property type="match status" value="1"/>
</dbReference>
<dbReference type="Gene3D" id="2.70.40.10">
    <property type="match status" value="1"/>
</dbReference>
<dbReference type="Gene3D" id="3.30.70.270">
    <property type="match status" value="2"/>
</dbReference>
<dbReference type="Gene3D" id="2.40.70.10">
    <property type="entry name" value="Acid Proteases"/>
    <property type="match status" value="1"/>
</dbReference>
<dbReference type="Gene3D" id="3.10.10.10">
    <property type="entry name" value="HIV Type 1 Reverse Transcriptase, subunit A, domain 1"/>
    <property type="match status" value="1"/>
</dbReference>
<dbReference type="Gene3D" id="1.10.375.10">
    <property type="entry name" value="Human Immunodeficiency Virus Type 1 Capsid Protein"/>
    <property type="match status" value="1"/>
</dbReference>
<dbReference type="Gene3D" id="2.30.30.10">
    <property type="entry name" value="Integrase, C-terminal domain superfamily, retroviral"/>
    <property type="match status" value="1"/>
</dbReference>
<dbReference type="Gene3D" id="1.10.150.490">
    <property type="entry name" value="Retroviral GAG p10 protein"/>
    <property type="match status" value="1"/>
</dbReference>
<dbReference type="Gene3D" id="3.30.420.10">
    <property type="entry name" value="Ribonuclease H-like superfamily/Ribonuclease H"/>
    <property type="match status" value="2"/>
</dbReference>
<dbReference type="Gene3D" id="4.10.60.10">
    <property type="entry name" value="Zinc finger, CCHC-type"/>
    <property type="match status" value="1"/>
</dbReference>
<dbReference type="InterPro" id="IPR001969">
    <property type="entry name" value="Aspartic_peptidase_AS"/>
</dbReference>
<dbReference type="InterPro" id="IPR003322">
    <property type="entry name" value="B_retro_matrix"/>
</dbReference>
<dbReference type="InterPro" id="IPR038124">
    <property type="entry name" value="B_retro_matrix_sf"/>
</dbReference>
<dbReference type="InterPro" id="IPR043502">
    <property type="entry name" value="DNA/RNA_pol_sf"/>
</dbReference>
<dbReference type="InterPro" id="IPR029054">
    <property type="entry name" value="dUTPase-like"/>
</dbReference>
<dbReference type="InterPro" id="IPR036157">
    <property type="entry name" value="dUTPase-like_sf"/>
</dbReference>
<dbReference type="InterPro" id="IPR033704">
    <property type="entry name" value="dUTPase_trimeric"/>
</dbReference>
<dbReference type="InterPro" id="IPR000467">
    <property type="entry name" value="G_patch_dom"/>
</dbReference>
<dbReference type="InterPro" id="IPR045345">
    <property type="entry name" value="Gag_p24_C"/>
</dbReference>
<dbReference type="InterPro" id="IPR017856">
    <property type="entry name" value="Integrase-like_N"/>
</dbReference>
<dbReference type="InterPro" id="IPR036862">
    <property type="entry name" value="Integrase_C_dom_sf_retrovir"/>
</dbReference>
<dbReference type="InterPro" id="IPR001037">
    <property type="entry name" value="Integrase_C_retrovir"/>
</dbReference>
<dbReference type="InterPro" id="IPR001584">
    <property type="entry name" value="Integrase_cat-core"/>
</dbReference>
<dbReference type="InterPro" id="IPR003308">
    <property type="entry name" value="Integrase_Zn-bd_dom_N"/>
</dbReference>
<dbReference type="InterPro" id="IPR001995">
    <property type="entry name" value="Peptidase_A2_cat"/>
</dbReference>
<dbReference type="InterPro" id="IPR021109">
    <property type="entry name" value="Peptidase_aspartic_dom_sf"/>
</dbReference>
<dbReference type="InterPro" id="IPR034170">
    <property type="entry name" value="Retropepsin-like_cat_dom"/>
</dbReference>
<dbReference type="InterPro" id="IPR018061">
    <property type="entry name" value="Retropepsins"/>
</dbReference>
<dbReference type="InterPro" id="IPR008916">
    <property type="entry name" value="Retrov_capsid_C"/>
</dbReference>
<dbReference type="InterPro" id="IPR008919">
    <property type="entry name" value="Retrov_capsid_N"/>
</dbReference>
<dbReference type="InterPro" id="IPR010999">
    <property type="entry name" value="Retrovr_matrix"/>
</dbReference>
<dbReference type="InterPro" id="IPR043128">
    <property type="entry name" value="Rev_trsase/Diguanyl_cyclase"/>
</dbReference>
<dbReference type="InterPro" id="IPR012337">
    <property type="entry name" value="RNaseH-like_sf"/>
</dbReference>
<dbReference type="InterPro" id="IPR002156">
    <property type="entry name" value="RNaseH_domain"/>
</dbReference>
<dbReference type="InterPro" id="IPR036397">
    <property type="entry name" value="RNaseH_sf"/>
</dbReference>
<dbReference type="InterPro" id="IPR000477">
    <property type="entry name" value="RT_dom"/>
</dbReference>
<dbReference type="InterPro" id="IPR010661">
    <property type="entry name" value="RVT_thumb"/>
</dbReference>
<dbReference type="InterPro" id="IPR001878">
    <property type="entry name" value="Znf_CCHC"/>
</dbReference>
<dbReference type="InterPro" id="IPR036875">
    <property type="entry name" value="Znf_CCHC_sf"/>
</dbReference>
<dbReference type="PANTHER" id="PTHR41694">
    <property type="entry name" value="ENDOGENOUS RETROVIRUS GROUP K MEMBER POL PROTEIN"/>
    <property type="match status" value="1"/>
</dbReference>
<dbReference type="PANTHER" id="PTHR41694:SF3">
    <property type="entry name" value="RNA-DIRECTED DNA POLYMERASE-RELATED"/>
    <property type="match status" value="1"/>
</dbReference>
<dbReference type="Pfam" id="PF00692">
    <property type="entry name" value="dUTPase"/>
    <property type="match status" value="1"/>
</dbReference>
<dbReference type="Pfam" id="PF01585">
    <property type="entry name" value="G-patch"/>
    <property type="match status" value="1"/>
</dbReference>
<dbReference type="Pfam" id="PF02337">
    <property type="entry name" value="Gag_p10"/>
    <property type="match status" value="1"/>
</dbReference>
<dbReference type="Pfam" id="PF00607">
    <property type="entry name" value="Gag_p24"/>
    <property type="match status" value="1"/>
</dbReference>
<dbReference type="Pfam" id="PF19317">
    <property type="entry name" value="Gag_p24_C"/>
    <property type="match status" value="1"/>
</dbReference>
<dbReference type="Pfam" id="PF00552">
    <property type="entry name" value="IN_DBD_C"/>
    <property type="match status" value="1"/>
</dbReference>
<dbReference type="Pfam" id="PF02022">
    <property type="entry name" value="Integrase_Zn"/>
    <property type="match status" value="1"/>
</dbReference>
<dbReference type="Pfam" id="PF00075">
    <property type="entry name" value="RNase_H"/>
    <property type="match status" value="1"/>
</dbReference>
<dbReference type="Pfam" id="PF00665">
    <property type="entry name" value="rve"/>
    <property type="match status" value="1"/>
</dbReference>
<dbReference type="Pfam" id="PF00077">
    <property type="entry name" value="RVP"/>
    <property type="match status" value="1"/>
</dbReference>
<dbReference type="Pfam" id="PF00078">
    <property type="entry name" value="RVT_1"/>
    <property type="match status" value="1"/>
</dbReference>
<dbReference type="Pfam" id="PF06817">
    <property type="entry name" value="RVT_thumb"/>
    <property type="match status" value="1"/>
</dbReference>
<dbReference type="Pfam" id="PF00098">
    <property type="entry name" value="zf-CCHC"/>
    <property type="match status" value="1"/>
</dbReference>
<dbReference type="Pfam" id="PF14787">
    <property type="entry name" value="zf-CCHC_5"/>
    <property type="match status" value="1"/>
</dbReference>
<dbReference type="SMART" id="SM00443">
    <property type="entry name" value="G_patch"/>
    <property type="match status" value="1"/>
</dbReference>
<dbReference type="SMART" id="SM00343">
    <property type="entry name" value="ZnF_C2HC"/>
    <property type="match status" value="2"/>
</dbReference>
<dbReference type="SUPFAM" id="SSF50630">
    <property type="entry name" value="Acid proteases"/>
    <property type="match status" value="1"/>
</dbReference>
<dbReference type="SUPFAM" id="SSF50122">
    <property type="entry name" value="DNA-binding domain of retroviral integrase"/>
    <property type="match status" value="1"/>
</dbReference>
<dbReference type="SUPFAM" id="SSF56672">
    <property type="entry name" value="DNA/RNA polymerases"/>
    <property type="match status" value="1"/>
</dbReference>
<dbReference type="SUPFAM" id="SSF51283">
    <property type="entry name" value="dUTPase-like"/>
    <property type="match status" value="1"/>
</dbReference>
<dbReference type="SUPFAM" id="SSF46919">
    <property type="entry name" value="N-terminal Zn binding domain of HIV integrase"/>
    <property type="match status" value="1"/>
</dbReference>
<dbReference type="SUPFAM" id="SSF47836">
    <property type="entry name" value="Retroviral matrix proteins"/>
    <property type="match status" value="1"/>
</dbReference>
<dbReference type="SUPFAM" id="SSF47353">
    <property type="entry name" value="Retrovirus capsid dimerization domain-like"/>
    <property type="match status" value="1"/>
</dbReference>
<dbReference type="SUPFAM" id="SSF47943">
    <property type="entry name" value="Retrovirus capsid protein, N-terminal core domain"/>
    <property type="match status" value="1"/>
</dbReference>
<dbReference type="SUPFAM" id="SSF57756">
    <property type="entry name" value="Retrovirus zinc finger-like domains"/>
    <property type="match status" value="2"/>
</dbReference>
<dbReference type="SUPFAM" id="SSF53098">
    <property type="entry name" value="Ribonuclease H-like"/>
    <property type="match status" value="1"/>
</dbReference>
<dbReference type="PROSITE" id="PS50175">
    <property type="entry name" value="ASP_PROT_RETROV"/>
    <property type="match status" value="1"/>
</dbReference>
<dbReference type="PROSITE" id="PS00141">
    <property type="entry name" value="ASP_PROTEASE"/>
    <property type="match status" value="1"/>
</dbReference>
<dbReference type="PROSITE" id="PS50174">
    <property type="entry name" value="G_PATCH"/>
    <property type="match status" value="1"/>
</dbReference>
<dbReference type="PROSITE" id="PS50994">
    <property type="entry name" value="INTEGRASE"/>
    <property type="match status" value="1"/>
</dbReference>
<dbReference type="PROSITE" id="PS51027">
    <property type="entry name" value="INTEGRASE_DBD"/>
    <property type="match status" value="1"/>
</dbReference>
<dbReference type="PROSITE" id="PS50879">
    <property type="entry name" value="RNASE_H_1"/>
    <property type="match status" value="1"/>
</dbReference>
<dbReference type="PROSITE" id="PS50878">
    <property type="entry name" value="RT_POL"/>
    <property type="match status" value="1"/>
</dbReference>
<dbReference type="PROSITE" id="PS50158">
    <property type="entry name" value="ZF_CCHC"/>
    <property type="match status" value="1"/>
</dbReference>
<dbReference type="PROSITE" id="PS50876">
    <property type="entry name" value="ZF_INTEGRASE"/>
    <property type="match status" value="1"/>
</dbReference>
<feature type="initiator methionine" description="Removed; by host" evidence="3">
    <location>
        <position position="1"/>
    </location>
</feature>
<feature type="chain" id="PRO_0000125499" description="Gag-Pro-Pol polyprotein">
    <location>
        <begin position="2"/>
        <end position="1768"/>
    </location>
</feature>
<feature type="chain" id="PRO_0000443169" description="Matrix protein p10">
    <location>
        <begin position="2"/>
        <end position="100"/>
    </location>
</feature>
<feature type="chain" id="PRO_0000443170" description="Phosphorylated protein pp24">
    <location>
        <begin position="101"/>
        <end position="214"/>
    </location>
</feature>
<feature type="propeptide" id="PRO_0000443171" evidence="18">
    <location>
        <begin position="101"/>
        <end position="159"/>
    </location>
</feature>
<feature type="chain" id="PRO_0000443172" description="Phosphorylated protein pp18">
    <location>
        <begin position="160"/>
        <end position="214"/>
    </location>
</feature>
<feature type="chain" id="PRO_0000443173" description="p12">
    <location>
        <begin position="215"/>
        <end position="297"/>
    </location>
</feature>
<feature type="chain" id="PRO_0000443174" description="Capsid protein p27">
    <location>
        <begin position="298"/>
        <end position="523"/>
    </location>
</feature>
<feature type="chain" id="PRO_0000443175" description="Nucleocapsid protein-dUTPase">
    <location>
        <begin position="524"/>
        <end position="756"/>
    </location>
</feature>
<feature type="chain" id="PRO_0000443176" description="Protease 17 kDa">
    <location>
        <begin position="757"/>
        <end position="908"/>
    </location>
</feature>
<feature type="chain" id="PRO_0000443177" description="Protease 13 kDa">
    <location>
        <begin position="757"/>
        <end position="874"/>
    </location>
</feature>
<feature type="peptide" id="PRO_0000443178" description="G-patch peptide">
    <location>
        <begin position="875"/>
        <end position="908"/>
    </location>
</feature>
<feature type="chain" id="PRO_0000443179" description="Reverse transcriptase/ribonuclease H">
    <location>
        <begin position="909"/>
        <end position="1493"/>
    </location>
</feature>
<feature type="chain" id="PRO_0000443180" description="Integrase">
    <location>
        <begin position="1494"/>
        <end position="1768"/>
    </location>
</feature>
<feature type="domain" description="Peptidase A2" evidence="11">
    <location>
        <begin position="777"/>
        <end position="853"/>
    </location>
</feature>
<feature type="domain" description="G-patch" evidence="10">
    <location>
        <begin position="864"/>
        <end position="910"/>
    </location>
</feature>
<feature type="domain" description="Reverse transcriptase" evidence="12">
    <location>
        <begin position="956"/>
        <end position="1144"/>
    </location>
</feature>
<feature type="domain" description="RNase H type-1" evidence="13">
    <location>
        <begin position="1358"/>
        <end position="1489"/>
    </location>
</feature>
<feature type="domain" description="Integrase catalytic" evidence="15">
    <location>
        <begin position="1547"/>
        <end position="1708"/>
    </location>
</feature>
<feature type="zinc finger region" description="CCHC-type" evidence="9">
    <location>
        <begin position="544"/>
        <end position="561"/>
    </location>
</feature>
<feature type="zinc finger region" description="Integrase-type" evidence="14">
    <location>
        <begin position="1493"/>
        <end position="1534"/>
    </location>
</feature>
<feature type="DNA-binding region" description="Integrase-type" evidence="16">
    <location>
        <begin position="1713"/>
        <end position="1762"/>
    </location>
</feature>
<feature type="region of interest" description="Disordered" evidence="17">
    <location>
        <begin position="132"/>
        <end position="152"/>
    </location>
</feature>
<feature type="region of interest" description="Disordered" evidence="17">
    <location>
        <begin position="589"/>
        <end position="622"/>
    </location>
</feature>
<feature type="coiled-coil region" evidence="8">
    <location>
        <begin position="215"/>
        <end position="251"/>
    </location>
</feature>
<feature type="short sequence motif" description="PPXY motif" evidence="5">
    <location>
        <begin position="200"/>
        <end position="203"/>
    </location>
</feature>
<feature type="active site" description="Protease; shared with dimeric partner" evidence="11">
    <location>
        <position position="782"/>
    </location>
</feature>
<feature type="binding site" evidence="12">
    <location>
        <position position="1021"/>
    </location>
    <ligand>
        <name>Mg(2+)</name>
        <dbReference type="ChEBI" id="CHEBI:18420"/>
        <label>1</label>
        <note>catalytic; for reverse transcriptase activity</note>
    </ligand>
</feature>
<feature type="binding site" evidence="12">
    <location>
        <position position="1096"/>
    </location>
    <ligand>
        <name>Mg(2+)</name>
        <dbReference type="ChEBI" id="CHEBI:18420"/>
        <label>1</label>
        <note>catalytic; for reverse transcriptase activity</note>
    </ligand>
</feature>
<feature type="binding site" evidence="12">
    <location>
        <position position="1097"/>
    </location>
    <ligand>
        <name>Mg(2+)</name>
        <dbReference type="ChEBI" id="CHEBI:18420"/>
        <label>1</label>
        <note>catalytic; for reverse transcriptase activity</note>
    </ligand>
</feature>
<feature type="binding site" evidence="13">
    <location>
        <position position="1367"/>
    </location>
    <ligand>
        <name>Mg(2+)</name>
        <dbReference type="ChEBI" id="CHEBI:18420"/>
        <label>2</label>
        <note>for RNase H activity</note>
    </ligand>
</feature>
<feature type="binding site" evidence="13">
    <location>
        <position position="1396"/>
    </location>
    <ligand>
        <name>Mg(2+)</name>
        <dbReference type="ChEBI" id="CHEBI:18420"/>
        <label>2</label>
        <note>for RNase H activity</note>
    </ligand>
</feature>
<feature type="binding site" evidence="13">
    <location>
        <position position="1417"/>
    </location>
    <ligand>
        <name>Mg(2+)</name>
        <dbReference type="ChEBI" id="CHEBI:18420"/>
        <label>2</label>
        <note>for RNase H activity</note>
    </ligand>
</feature>
<feature type="binding site" evidence="13">
    <location>
        <position position="1481"/>
    </location>
    <ligand>
        <name>Mg(2+)</name>
        <dbReference type="ChEBI" id="CHEBI:18420"/>
        <label>2</label>
        <note>for RNase H activity</note>
    </ligand>
</feature>
<feature type="binding site" evidence="14">
    <location>
        <position position="1502"/>
    </location>
    <ligand>
        <name>Zn(2+)</name>
        <dbReference type="ChEBI" id="CHEBI:29105"/>
    </ligand>
</feature>
<feature type="binding site" evidence="14">
    <location>
        <position position="1506"/>
    </location>
    <ligand>
        <name>Zn(2+)</name>
        <dbReference type="ChEBI" id="CHEBI:29105"/>
    </ligand>
</feature>
<feature type="binding site" evidence="14">
    <location>
        <position position="1530"/>
    </location>
    <ligand>
        <name>Zn(2+)</name>
        <dbReference type="ChEBI" id="CHEBI:29105"/>
    </ligand>
</feature>
<feature type="binding site" evidence="14">
    <location>
        <position position="1533"/>
    </location>
    <ligand>
        <name>Zn(2+)</name>
        <dbReference type="ChEBI" id="CHEBI:29105"/>
    </ligand>
</feature>
<feature type="binding site" evidence="15">
    <location>
        <position position="1558"/>
    </location>
    <ligand>
        <name>Mg(2+)</name>
        <dbReference type="ChEBI" id="CHEBI:18420"/>
        <label>3</label>
        <note>catalytic; for integrase activity</note>
    </ligand>
</feature>
<feature type="binding site" evidence="15">
    <location>
        <position position="1615"/>
    </location>
    <ligand>
        <name>Mg(2+)</name>
        <dbReference type="ChEBI" id="CHEBI:18420"/>
        <label>3</label>
        <note>catalytic; for integrase activity</note>
    </ligand>
</feature>
<feature type="binding site" evidence="1">
    <location>
        <position position="1651"/>
    </location>
    <ligand>
        <name>Mg(2+)</name>
        <dbReference type="ChEBI" id="CHEBI:18420"/>
        <label>3</label>
        <note>catalytic; for integrase activity</note>
    </ligand>
</feature>
<feature type="site" description="Cleavage; by viral protease" evidence="3">
    <location>
        <begin position="100"/>
        <end position="101"/>
    </location>
</feature>
<feature type="site" description="Cleavage; by viral protease" evidence="3">
    <location>
        <begin position="159"/>
        <end position="160"/>
    </location>
</feature>
<feature type="site" description="Cleavage; by viral protease" evidence="3">
    <location>
        <begin position="214"/>
        <end position="215"/>
    </location>
</feature>
<feature type="site" description="Cleavage; by viral protease" evidence="3">
    <location>
        <begin position="297"/>
        <end position="298"/>
    </location>
</feature>
<feature type="site" description="Cleavage; by viral protease" evidence="3">
    <location>
        <begin position="523"/>
        <end position="524"/>
    </location>
</feature>
<feature type="site" description="Cleavage; by viral protease" evidence="5">
    <location>
        <begin position="756"/>
        <end position="757"/>
    </location>
</feature>
<feature type="site" description="Cleavage; by viral protease" evidence="5">
    <location>
        <begin position="874"/>
        <end position="875"/>
    </location>
</feature>
<feature type="site" description="Cleavage; by viral protease" evidence="5">
    <location>
        <begin position="908"/>
        <end position="909"/>
    </location>
</feature>
<feature type="site" description="Cleavage; by viral protease" evidence="2">
    <location>
        <begin position="1493"/>
        <end position="1494"/>
    </location>
</feature>
<feature type="lipid moiety-binding region" description="N-myristoyl glycine; by host" evidence="7">
    <location>
        <position position="2"/>
    </location>
</feature>
<keyword id="KW-0064">Aspartyl protease</keyword>
<keyword id="KW-0175">Coiled coil</keyword>
<keyword id="KW-0229">DNA integration</keyword>
<keyword id="KW-0233">DNA recombination</keyword>
<keyword id="KW-0238">DNA-binding</keyword>
<keyword id="KW-0239">DNA-directed DNA polymerase</keyword>
<keyword id="KW-0255">Endonuclease</keyword>
<keyword id="KW-0378">Hydrolase</keyword>
<keyword id="KW-0449">Lipoprotein</keyword>
<keyword id="KW-0460">Magnesium</keyword>
<keyword id="KW-0479">Metal-binding</keyword>
<keyword id="KW-0511">Multifunctional enzyme</keyword>
<keyword id="KW-0519">Myristate</keyword>
<keyword id="KW-0540">Nuclease</keyword>
<keyword id="KW-0548">Nucleotidyltransferase</keyword>
<keyword id="KW-0645">Protease</keyword>
<keyword id="KW-0677">Repeat</keyword>
<keyword id="KW-0688">Ribosomal frameshifting</keyword>
<keyword id="KW-0694">RNA-binding</keyword>
<keyword id="KW-0695">RNA-directed DNA polymerase</keyword>
<keyword id="KW-0808">Transferase</keyword>
<keyword id="KW-1179">Viral genome integration</keyword>
<keyword id="KW-0468">Viral matrix protein</keyword>
<keyword id="KW-0543">Viral nucleoprotein</keyword>
<keyword id="KW-0946">Virion</keyword>
<keyword id="KW-1160">Virus entry into host cell</keyword>
<keyword id="KW-0862">Zinc</keyword>
<keyword id="KW-0863">Zinc-finger</keyword>
<protein>
    <recommendedName>
        <fullName>Gag-Pro-Pol polyprotein</fullName>
    </recommendedName>
    <component>
        <recommendedName>
            <fullName>Matrix protein p10</fullName>
        </recommendedName>
    </component>
    <component>
        <recommendedName>
            <fullName>Phosphorylated protein pp24</fullName>
        </recommendedName>
    </component>
    <component>
        <recommendedName>
            <fullName>Phosphorylated protein pp18</fullName>
        </recommendedName>
    </component>
    <component>
        <recommendedName>
            <fullName>p12</fullName>
        </recommendedName>
    </component>
    <component>
        <recommendedName>
            <fullName>Capsid protein p27</fullName>
        </recommendedName>
    </component>
    <component>
        <recommendedName>
            <fullName>Nucleocapsid protein-dUTPase</fullName>
            <shortName>NC-dUTPase</shortName>
            <ecNumber evidence="7">3.6.1.23</ecNumber>
        </recommendedName>
    </component>
    <component>
        <recommendedName>
            <fullName evidence="5">Protease 17 kDa</fullName>
            <ecNumber evidence="11">3.4.23.-</ecNumber>
        </recommendedName>
    </component>
    <component>
        <recommendedName>
            <fullName evidence="5">Protease 13 kDa</fullName>
            <ecNumber evidence="11">3.4.23.-</ecNumber>
        </recommendedName>
    </component>
    <component>
        <recommendedName>
            <fullName evidence="5">G-patch peptide</fullName>
        </recommendedName>
    </component>
    <component>
        <recommendedName>
            <fullName>Reverse transcriptase/ribonuclease H</fullName>
            <shortName>RT</shortName>
            <ecNumber evidence="12">2.7.7.49</ecNumber>
            <ecNumber evidence="12">2.7.7.7</ecNumber>
            <ecNumber evidence="13">3.1.26.4</ecNumber>
        </recommendedName>
    </component>
    <component>
        <recommendedName>
            <fullName>Integrase</fullName>
            <shortName>IN</shortName>
            <ecNumber evidence="7">2.7.7.-</ecNumber>
            <ecNumber evidence="7">3.1.-.-</ecNumber>
        </recommendedName>
    </component>
</protein>
<organism>
    <name type="scientific">Simian retrovirus SRV-2</name>
    <dbReference type="NCBI Taxonomy" id="39068"/>
    <lineage>
        <taxon>Viruses</taxon>
        <taxon>Riboviria</taxon>
        <taxon>Pararnavirae</taxon>
        <taxon>Artverviricota</taxon>
        <taxon>Revtraviricetes</taxon>
        <taxon>Ortervirales</taxon>
        <taxon>Retroviridae</taxon>
        <taxon>Orthoretrovirinae</taxon>
        <taxon>Betaretrovirus</taxon>
        <taxon>Mason-Pfizer monkey virus</taxon>
    </lineage>
</organism>
<name>POL_SRV2</name>
<proteinExistence type="inferred from homology"/>